<dbReference type="EC" id="2.7.1.59" evidence="1"/>
<dbReference type="EMBL" id="CR378668">
    <property type="protein sequence ID" value="CAG20154.1"/>
    <property type="molecule type" value="Genomic_DNA"/>
</dbReference>
<dbReference type="RefSeq" id="WP_011218463.1">
    <property type="nucleotide sequence ID" value="NC_006370.1"/>
</dbReference>
<dbReference type="SMR" id="Q6LRC2"/>
<dbReference type="STRING" id="298386.PBPRA1747"/>
<dbReference type="KEGG" id="ppr:PBPRA1747"/>
<dbReference type="eggNOG" id="COG1940">
    <property type="taxonomic scope" value="Bacteria"/>
</dbReference>
<dbReference type="HOGENOM" id="CLU_036604_0_3_6"/>
<dbReference type="UniPathway" id="UPA00544"/>
<dbReference type="Proteomes" id="UP000000593">
    <property type="component" value="Chromosome 1"/>
</dbReference>
<dbReference type="GO" id="GO:0005524">
    <property type="term" value="F:ATP binding"/>
    <property type="evidence" value="ECO:0007669"/>
    <property type="project" value="UniProtKB-UniRule"/>
</dbReference>
<dbReference type="GO" id="GO:0045127">
    <property type="term" value="F:N-acetylglucosamine kinase activity"/>
    <property type="evidence" value="ECO:0007669"/>
    <property type="project" value="UniProtKB-UniRule"/>
</dbReference>
<dbReference type="GO" id="GO:0008270">
    <property type="term" value="F:zinc ion binding"/>
    <property type="evidence" value="ECO:0007669"/>
    <property type="project" value="UniProtKB-UniRule"/>
</dbReference>
<dbReference type="GO" id="GO:0006044">
    <property type="term" value="P:N-acetylglucosamine metabolic process"/>
    <property type="evidence" value="ECO:0007669"/>
    <property type="project" value="UniProtKB-UniRule"/>
</dbReference>
<dbReference type="GO" id="GO:0009254">
    <property type="term" value="P:peptidoglycan turnover"/>
    <property type="evidence" value="ECO:0007669"/>
    <property type="project" value="UniProtKB-UniRule"/>
</dbReference>
<dbReference type="CDD" id="cd24057">
    <property type="entry name" value="ASKHA_NBD_ROK_NAGK"/>
    <property type="match status" value="1"/>
</dbReference>
<dbReference type="FunFam" id="3.30.420.40:FF:000049">
    <property type="entry name" value="N-acetyl-D-glucosamine kinase"/>
    <property type="match status" value="1"/>
</dbReference>
<dbReference type="Gene3D" id="3.30.420.40">
    <property type="match status" value="2"/>
</dbReference>
<dbReference type="HAMAP" id="MF_01271">
    <property type="entry name" value="GlcNAc_kinase"/>
    <property type="match status" value="1"/>
</dbReference>
<dbReference type="InterPro" id="IPR043129">
    <property type="entry name" value="ATPase_NBD"/>
</dbReference>
<dbReference type="InterPro" id="IPR023505">
    <property type="entry name" value="N-acetyl-D-glucosamine_kinase"/>
</dbReference>
<dbReference type="InterPro" id="IPR000600">
    <property type="entry name" value="ROK"/>
</dbReference>
<dbReference type="InterPro" id="IPR049874">
    <property type="entry name" value="ROK_cs"/>
</dbReference>
<dbReference type="NCBIfam" id="NF009835">
    <property type="entry name" value="PRK13310.1"/>
    <property type="match status" value="1"/>
</dbReference>
<dbReference type="PANTHER" id="PTHR18964:SF162">
    <property type="entry name" value="N-ACETYL-D-GLUCOSAMINE KINASE"/>
    <property type="match status" value="1"/>
</dbReference>
<dbReference type="PANTHER" id="PTHR18964">
    <property type="entry name" value="ROK (REPRESSOR, ORF, KINASE) FAMILY"/>
    <property type="match status" value="1"/>
</dbReference>
<dbReference type="Pfam" id="PF00480">
    <property type="entry name" value="ROK"/>
    <property type="match status" value="1"/>
</dbReference>
<dbReference type="SUPFAM" id="SSF53067">
    <property type="entry name" value="Actin-like ATPase domain"/>
    <property type="match status" value="1"/>
</dbReference>
<dbReference type="PROSITE" id="PS01125">
    <property type="entry name" value="ROK"/>
    <property type="match status" value="1"/>
</dbReference>
<reference key="1">
    <citation type="journal article" date="2005" name="Science">
        <title>Life at depth: Photobacterium profundum genome sequence and expression analysis.</title>
        <authorList>
            <person name="Vezzi A."/>
            <person name="Campanaro S."/>
            <person name="D'Angelo M."/>
            <person name="Simonato F."/>
            <person name="Vitulo N."/>
            <person name="Lauro F.M."/>
            <person name="Cestaro A."/>
            <person name="Malacrida G."/>
            <person name="Simionati B."/>
            <person name="Cannata N."/>
            <person name="Romualdi C."/>
            <person name="Bartlett D.H."/>
            <person name="Valle G."/>
        </authorList>
    </citation>
    <scope>NUCLEOTIDE SEQUENCE [LARGE SCALE GENOMIC DNA]</scope>
    <source>
        <strain>ATCC BAA-1253 / SS9</strain>
    </source>
</reference>
<sequence>MYYGFDVGGTKIEFGAFNEKLERVATERVATPRDDYDKLVDTIVGIIQKADNDLGCEGLVGIGLPGMEDARDGSVLTSNIPAAKGRFLRKDLEAKLGRTVTIDNDANCFALSEAWDESLQGEKSVLGLILGTGFGGGLVFDGHVFSGMNHVAGELGHTRMPIDAWFSLGEKAPLFTCGCDNKGCIDNYLSGRGFEQLYAHYYGENLKAIEIIKLHATGEAKAVEHVDRFMEMLAICLANIFTGLDPHVVVLGGGLSNFELLYQELPKRIAKHLLSVAQVPKIVKAKHGDAGGVRGAAFLNIKK</sequence>
<gene>
    <name evidence="1" type="primary">nagK</name>
    <name type="ordered locus">PBPRA1747</name>
</gene>
<protein>
    <recommendedName>
        <fullName evidence="1">N-acetyl-D-glucosamine kinase</fullName>
        <ecNumber evidence="1">2.7.1.59</ecNumber>
    </recommendedName>
    <alternativeName>
        <fullName evidence="1">GlcNAc kinase</fullName>
    </alternativeName>
</protein>
<keyword id="KW-0067">ATP-binding</keyword>
<keyword id="KW-0119">Carbohydrate metabolism</keyword>
<keyword id="KW-0418">Kinase</keyword>
<keyword id="KW-0479">Metal-binding</keyword>
<keyword id="KW-0547">Nucleotide-binding</keyword>
<keyword id="KW-1185">Reference proteome</keyword>
<keyword id="KW-0808">Transferase</keyword>
<keyword id="KW-0862">Zinc</keyword>
<name>NAGK_PHOPR</name>
<proteinExistence type="inferred from homology"/>
<accession>Q6LRC2</accession>
<feature type="chain" id="PRO_0000270110" description="N-acetyl-D-glucosamine kinase">
    <location>
        <begin position="1"/>
        <end position="303"/>
    </location>
</feature>
<feature type="binding site" evidence="1">
    <location>
        <begin position="4"/>
        <end position="11"/>
    </location>
    <ligand>
        <name>ATP</name>
        <dbReference type="ChEBI" id="CHEBI:30616"/>
    </ligand>
</feature>
<feature type="binding site" evidence="1">
    <location>
        <begin position="133"/>
        <end position="140"/>
    </location>
    <ligand>
        <name>ATP</name>
        <dbReference type="ChEBI" id="CHEBI:30616"/>
    </ligand>
</feature>
<feature type="binding site" evidence="1">
    <location>
        <position position="157"/>
    </location>
    <ligand>
        <name>Zn(2+)</name>
        <dbReference type="ChEBI" id="CHEBI:29105"/>
    </ligand>
</feature>
<feature type="binding site" evidence="1">
    <location>
        <position position="177"/>
    </location>
    <ligand>
        <name>Zn(2+)</name>
        <dbReference type="ChEBI" id="CHEBI:29105"/>
    </ligand>
</feature>
<feature type="binding site" evidence="1">
    <location>
        <position position="179"/>
    </location>
    <ligand>
        <name>Zn(2+)</name>
        <dbReference type="ChEBI" id="CHEBI:29105"/>
    </ligand>
</feature>
<feature type="binding site" evidence="1">
    <location>
        <position position="184"/>
    </location>
    <ligand>
        <name>Zn(2+)</name>
        <dbReference type="ChEBI" id="CHEBI:29105"/>
    </ligand>
</feature>
<comment type="function">
    <text evidence="1">Catalyzes the phosphorylation of N-acetyl-D-glucosamine (GlcNAc) derived from cell-wall degradation, yielding GlcNAc-6-P.</text>
</comment>
<comment type="catalytic activity">
    <reaction evidence="1">
        <text>N-acetyl-D-glucosamine + ATP = N-acetyl-D-glucosamine 6-phosphate + ADP + H(+)</text>
        <dbReference type="Rhea" id="RHEA:17417"/>
        <dbReference type="ChEBI" id="CHEBI:15378"/>
        <dbReference type="ChEBI" id="CHEBI:30616"/>
        <dbReference type="ChEBI" id="CHEBI:57513"/>
        <dbReference type="ChEBI" id="CHEBI:456216"/>
        <dbReference type="ChEBI" id="CHEBI:506227"/>
        <dbReference type="EC" id="2.7.1.59"/>
    </reaction>
</comment>
<comment type="pathway">
    <text evidence="1">Cell wall biogenesis; peptidoglycan recycling.</text>
</comment>
<comment type="similarity">
    <text evidence="1">Belongs to the ROK (NagC/XylR) family. NagK subfamily.</text>
</comment>
<organism>
    <name type="scientific">Photobacterium profundum (strain SS9)</name>
    <dbReference type="NCBI Taxonomy" id="298386"/>
    <lineage>
        <taxon>Bacteria</taxon>
        <taxon>Pseudomonadati</taxon>
        <taxon>Pseudomonadota</taxon>
        <taxon>Gammaproteobacteria</taxon>
        <taxon>Vibrionales</taxon>
        <taxon>Vibrionaceae</taxon>
        <taxon>Photobacterium</taxon>
    </lineage>
</organism>
<evidence type="ECO:0000255" key="1">
    <source>
        <dbReference type="HAMAP-Rule" id="MF_01271"/>
    </source>
</evidence>